<sequence length="82" mass="9020">MANSNNKTNAQQVRKQNQQSASGQGQFGTEFASETNVQQVRKQNQQSAAGQGQFGTEFASETDAQQVRQQNQSAEQNKQQNS</sequence>
<feature type="initiator methionine" description="Removed" evidence="5">
    <location>
        <position position="1"/>
    </location>
</feature>
<feature type="chain" id="PRO_0000196326" description="Small, acid-soluble spore protein gamma-type">
    <location>
        <begin position="2"/>
        <end position="82"/>
    </location>
</feature>
<feature type="repeat">
    <location>
        <begin position="19"/>
        <end position="45"/>
    </location>
</feature>
<feature type="repeat">
    <location>
        <begin position="46"/>
        <end position="72"/>
    </location>
</feature>
<feature type="region of interest" description="Disordered" evidence="4">
    <location>
        <begin position="1"/>
        <end position="82"/>
    </location>
</feature>
<feature type="compositionally biased region" description="Polar residues" evidence="4">
    <location>
        <begin position="1"/>
        <end position="24"/>
    </location>
</feature>
<feature type="compositionally biased region" description="Polar residues" evidence="4">
    <location>
        <begin position="32"/>
        <end position="50"/>
    </location>
</feature>
<feature type="compositionally biased region" description="Low complexity" evidence="4">
    <location>
        <begin position="69"/>
        <end position="82"/>
    </location>
</feature>
<feature type="site" description="Cleavage; by spore protease" evidence="1">
    <location>
        <begin position="30"/>
        <end position="31"/>
    </location>
</feature>
<feature type="site" description="Cleavage; by spore protease" evidence="1">
    <location>
        <begin position="57"/>
        <end position="58"/>
    </location>
</feature>
<accession>P84585</accession>
<evidence type="ECO:0000250" key="1"/>
<evidence type="ECO:0000250" key="2">
    <source>
        <dbReference type="UniProtKB" id="P07785"/>
    </source>
</evidence>
<evidence type="ECO:0000255" key="3"/>
<evidence type="ECO:0000256" key="4">
    <source>
        <dbReference type="SAM" id="MobiDB-lite"/>
    </source>
</evidence>
<evidence type="ECO:0000269" key="5">
    <source>
    </source>
</evidence>
<evidence type="ECO:0000305" key="6"/>
<organism>
    <name type="scientific">Bacillus subtilis</name>
    <dbReference type="NCBI Taxonomy" id="1423"/>
    <lineage>
        <taxon>Bacteria</taxon>
        <taxon>Bacillati</taxon>
        <taxon>Bacillota</taxon>
        <taxon>Bacilli</taxon>
        <taxon>Bacillales</taxon>
        <taxon>Bacillaceae</taxon>
        <taxon>Bacillus</taxon>
    </lineage>
</organism>
<proteinExistence type="evidence at protein level"/>
<keyword id="KW-0903">Direct protein sequencing</keyword>
<keyword id="KW-0677">Repeat</keyword>
<keyword id="KW-0749">Sporulation</keyword>
<comment type="function">
    <text evidence="2">SASP are bound to spore DNA. They are double-stranded DNA-binding proteins that cause DNA to change to an a-like conformation. They protect the DNA backbone from chemical and enzymatic cleavage and are thus involved in dormant spore's high resistance to UV light (By similarity).</text>
</comment>
<comment type="mass spectrometry" mass="8888.83" error="0.98" method="MALDI" evidence="5"/>
<comment type="mass spectrometry" mass="8889.87" error="0.83" method="Electrospray" evidence="5"/>
<comment type="miscellaneous">
    <text evidence="1">SASP are degraded in the first minutes of spore germination and provide amino acids for both new protein synthesis and metabolism.</text>
</comment>
<comment type="similarity">
    <text evidence="3">Belongs to the gamma-type SASP family.</text>
</comment>
<dbReference type="STRING" id="483913.AN935_04500"/>
<dbReference type="GO" id="GO:0030435">
    <property type="term" value="P:sporulation resulting in formation of a cellular spore"/>
    <property type="evidence" value="ECO:0007669"/>
    <property type="project" value="UniProtKB-KW"/>
</dbReference>
<dbReference type="InterPro" id="IPR006341">
    <property type="entry name" value="Spore_gamma"/>
</dbReference>
<dbReference type="NCBIfam" id="TIGR01442">
    <property type="entry name" value="SASP_gamma"/>
    <property type="match status" value="1"/>
</dbReference>
<dbReference type="Pfam" id="PF04259">
    <property type="entry name" value="SASP_gamma"/>
    <property type="match status" value="1"/>
</dbReference>
<protein>
    <recommendedName>
        <fullName>Small, acid-soluble spore protein gamma-type</fullName>
        <shortName>SASP-gamma</shortName>
    </recommendedName>
</protein>
<reference evidence="6" key="1">
    <citation type="journal article" date="2004" name="J. Mass Spectrom.">
        <title>Complete sequences of small acid-soluble proteins from Bacillus globigii.</title>
        <authorList>
            <person name="Whiteaker J.R."/>
            <person name="Warscheid B."/>
            <person name="Pribil P."/>
            <person name="Hathout Y."/>
            <person name="Fenselau C."/>
        </authorList>
    </citation>
    <scope>PROTEIN SEQUENCE OF 2-82</scope>
    <scope>MASS SPECTROMETRY</scope>
    <source>
        <strain evidence="5">Globigii</strain>
    </source>
</reference>
<name>SASG_BACIU</name>